<proteinExistence type="inferred from homology"/>
<organism>
    <name type="scientific">Salmonella typhimurium (strain LT2 / SGSC1412 / ATCC 700720)</name>
    <dbReference type="NCBI Taxonomy" id="99287"/>
    <lineage>
        <taxon>Bacteria</taxon>
        <taxon>Pseudomonadati</taxon>
        <taxon>Pseudomonadota</taxon>
        <taxon>Gammaproteobacteria</taxon>
        <taxon>Enterobacterales</taxon>
        <taxon>Enterobacteriaceae</taxon>
        <taxon>Salmonella</taxon>
    </lineage>
</organism>
<name>LFTR_SALTY</name>
<comment type="function">
    <text evidence="1">Functions in the N-end rule pathway of protein degradation where it conjugates Leu, Phe and, less efficiently, Met from aminoacyl-tRNAs to the N-termini of proteins containing an N-terminal arginine or lysine.</text>
</comment>
<comment type="catalytic activity">
    <reaction evidence="1">
        <text>N-terminal L-lysyl-[protein] + L-leucyl-tRNA(Leu) = N-terminal L-leucyl-L-lysyl-[protein] + tRNA(Leu) + H(+)</text>
        <dbReference type="Rhea" id="RHEA:12340"/>
        <dbReference type="Rhea" id="RHEA-COMP:9613"/>
        <dbReference type="Rhea" id="RHEA-COMP:9622"/>
        <dbReference type="Rhea" id="RHEA-COMP:12670"/>
        <dbReference type="Rhea" id="RHEA-COMP:12671"/>
        <dbReference type="ChEBI" id="CHEBI:15378"/>
        <dbReference type="ChEBI" id="CHEBI:65249"/>
        <dbReference type="ChEBI" id="CHEBI:78442"/>
        <dbReference type="ChEBI" id="CHEBI:78494"/>
        <dbReference type="ChEBI" id="CHEBI:133043"/>
        <dbReference type="EC" id="2.3.2.6"/>
    </reaction>
</comment>
<comment type="catalytic activity">
    <reaction evidence="1">
        <text>N-terminal L-arginyl-[protein] + L-leucyl-tRNA(Leu) = N-terminal L-leucyl-L-arginyl-[protein] + tRNA(Leu) + H(+)</text>
        <dbReference type="Rhea" id="RHEA:50416"/>
        <dbReference type="Rhea" id="RHEA-COMP:9613"/>
        <dbReference type="Rhea" id="RHEA-COMP:9622"/>
        <dbReference type="Rhea" id="RHEA-COMP:12672"/>
        <dbReference type="Rhea" id="RHEA-COMP:12673"/>
        <dbReference type="ChEBI" id="CHEBI:15378"/>
        <dbReference type="ChEBI" id="CHEBI:64719"/>
        <dbReference type="ChEBI" id="CHEBI:78442"/>
        <dbReference type="ChEBI" id="CHEBI:78494"/>
        <dbReference type="ChEBI" id="CHEBI:133044"/>
        <dbReference type="EC" id="2.3.2.6"/>
    </reaction>
</comment>
<comment type="catalytic activity">
    <reaction evidence="1">
        <text>L-phenylalanyl-tRNA(Phe) + an N-terminal L-alpha-aminoacyl-[protein] = an N-terminal L-phenylalanyl-L-alpha-aminoacyl-[protein] + tRNA(Phe)</text>
        <dbReference type="Rhea" id="RHEA:43632"/>
        <dbReference type="Rhea" id="RHEA-COMP:9668"/>
        <dbReference type="Rhea" id="RHEA-COMP:9699"/>
        <dbReference type="Rhea" id="RHEA-COMP:10636"/>
        <dbReference type="Rhea" id="RHEA-COMP:10637"/>
        <dbReference type="ChEBI" id="CHEBI:78442"/>
        <dbReference type="ChEBI" id="CHEBI:78531"/>
        <dbReference type="ChEBI" id="CHEBI:78597"/>
        <dbReference type="ChEBI" id="CHEBI:83561"/>
        <dbReference type="EC" id="2.3.2.6"/>
    </reaction>
</comment>
<comment type="subcellular location">
    <subcellularLocation>
        <location evidence="1">Cytoplasm</location>
    </subcellularLocation>
</comment>
<comment type="similarity">
    <text evidence="1">Belongs to the L/F-transferase family.</text>
</comment>
<sequence>MRLVQLSRHSIAFPSPEGALREPNGLLALGGDLSPARLLMAYQHGIFPWFSPGDPILWWSPDPRAVLWPEKFHLSRSMKRFHNASPYRVTLNYAFDRVIDGCANHRDEGTWITRGIEEAYRRLHELGHAHSIEVWRDRELVGGMYGVSQGALFCGESMFSRQENASKTALLVFCAEFTRHGGKLIDCQVLNSHTASLGAIEIPRRDYLDHLAALRQQPLASRFWVPRTLFLPRK</sequence>
<evidence type="ECO:0000255" key="1">
    <source>
        <dbReference type="HAMAP-Rule" id="MF_00688"/>
    </source>
</evidence>
<protein>
    <recommendedName>
        <fullName evidence="1">Leucyl/phenylalanyl-tRNA--protein transferase</fullName>
        <ecNumber evidence="1">2.3.2.6</ecNumber>
    </recommendedName>
    <alternativeName>
        <fullName evidence="1">L/F-transferase</fullName>
    </alternativeName>
    <alternativeName>
        <fullName evidence="1">Leucyltransferase</fullName>
    </alternativeName>
    <alternativeName>
        <fullName evidence="1">Phenyalanyltransferase</fullName>
    </alternativeName>
</protein>
<accession>P67613</accession>
<accession>Q8XEV8</accession>
<reference key="1">
    <citation type="journal article" date="2001" name="Nature">
        <title>Complete genome sequence of Salmonella enterica serovar Typhimurium LT2.</title>
        <authorList>
            <person name="McClelland M."/>
            <person name="Sanderson K.E."/>
            <person name="Spieth J."/>
            <person name="Clifton S.W."/>
            <person name="Latreille P."/>
            <person name="Courtney L."/>
            <person name="Porwollik S."/>
            <person name="Ali J."/>
            <person name="Dante M."/>
            <person name="Du F."/>
            <person name="Hou S."/>
            <person name="Layman D."/>
            <person name="Leonard S."/>
            <person name="Nguyen C."/>
            <person name="Scott K."/>
            <person name="Holmes A."/>
            <person name="Grewal N."/>
            <person name="Mulvaney E."/>
            <person name="Ryan E."/>
            <person name="Sun H."/>
            <person name="Florea L."/>
            <person name="Miller W."/>
            <person name="Stoneking T."/>
            <person name="Nhan M."/>
            <person name="Waterston R."/>
            <person name="Wilson R.K."/>
        </authorList>
    </citation>
    <scope>NUCLEOTIDE SEQUENCE [LARGE SCALE GENOMIC DNA]</scope>
    <source>
        <strain>LT2 / SGSC1412 / ATCC 700720</strain>
    </source>
</reference>
<gene>
    <name evidence="1" type="primary">aat</name>
    <name type="ordered locus">STM0955</name>
</gene>
<feature type="chain" id="PRO_0000207242" description="Leucyl/phenylalanyl-tRNA--protein transferase">
    <location>
        <begin position="1"/>
        <end position="234"/>
    </location>
</feature>
<keyword id="KW-0012">Acyltransferase</keyword>
<keyword id="KW-0963">Cytoplasm</keyword>
<keyword id="KW-1185">Reference proteome</keyword>
<keyword id="KW-0808">Transferase</keyword>
<dbReference type="EC" id="2.3.2.6" evidence="1"/>
<dbReference type="EMBL" id="AE006468">
    <property type="protein sequence ID" value="AAL19890.1"/>
    <property type="molecule type" value="Genomic_DNA"/>
</dbReference>
<dbReference type="RefSeq" id="NP_459931.1">
    <property type="nucleotide sequence ID" value="NC_003197.2"/>
</dbReference>
<dbReference type="RefSeq" id="WP_001241650.1">
    <property type="nucleotide sequence ID" value="NC_003197.2"/>
</dbReference>
<dbReference type="SMR" id="P67613"/>
<dbReference type="STRING" id="99287.STM0955"/>
<dbReference type="PaxDb" id="99287-STM0955"/>
<dbReference type="GeneID" id="1252474"/>
<dbReference type="KEGG" id="stm:STM0955"/>
<dbReference type="PATRIC" id="fig|99287.12.peg.1006"/>
<dbReference type="HOGENOM" id="CLU_075045_0_0_6"/>
<dbReference type="OMA" id="YRQGIFP"/>
<dbReference type="PhylomeDB" id="P67613"/>
<dbReference type="BioCyc" id="SENT99287:STM0955-MONOMER"/>
<dbReference type="Proteomes" id="UP000001014">
    <property type="component" value="Chromosome"/>
</dbReference>
<dbReference type="GO" id="GO:0005737">
    <property type="term" value="C:cytoplasm"/>
    <property type="evidence" value="ECO:0000318"/>
    <property type="project" value="GO_Central"/>
</dbReference>
<dbReference type="GO" id="GO:0008914">
    <property type="term" value="F:leucyl-tRNA--protein transferase activity"/>
    <property type="evidence" value="ECO:0000318"/>
    <property type="project" value="GO_Central"/>
</dbReference>
<dbReference type="GO" id="GO:0030163">
    <property type="term" value="P:protein catabolic process"/>
    <property type="evidence" value="ECO:0007669"/>
    <property type="project" value="UniProtKB-UniRule"/>
</dbReference>
<dbReference type="FunFam" id="3.30.70.3550:FF:000001">
    <property type="entry name" value="Leucyl/phenylalanyl-tRNA--protein transferase"/>
    <property type="match status" value="1"/>
</dbReference>
<dbReference type="FunFam" id="3.40.630.70:FF:000001">
    <property type="entry name" value="Leucyl/phenylalanyl-tRNA--protein transferase"/>
    <property type="match status" value="1"/>
</dbReference>
<dbReference type="Gene3D" id="3.40.630.70">
    <property type="entry name" value="Leucyl/phenylalanyl-tRNA-protein transferase, C-terminal domain"/>
    <property type="match status" value="1"/>
</dbReference>
<dbReference type="Gene3D" id="3.30.70.3550">
    <property type="entry name" value="Leucyl/phenylalanyl-tRNA-protein transferase, N-terminal domain"/>
    <property type="match status" value="1"/>
</dbReference>
<dbReference type="HAMAP" id="MF_00688">
    <property type="entry name" value="Leu_Phe_trans"/>
    <property type="match status" value="1"/>
</dbReference>
<dbReference type="InterPro" id="IPR016181">
    <property type="entry name" value="Acyl_CoA_acyltransferase"/>
</dbReference>
<dbReference type="InterPro" id="IPR004616">
    <property type="entry name" value="Leu/Phe-tRNA_Trfase"/>
</dbReference>
<dbReference type="InterPro" id="IPR042203">
    <property type="entry name" value="Leu/Phe-tRNA_Trfase_C"/>
</dbReference>
<dbReference type="InterPro" id="IPR042221">
    <property type="entry name" value="Leu/Phe-tRNA_Trfase_N"/>
</dbReference>
<dbReference type="NCBIfam" id="TIGR00667">
    <property type="entry name" value="aat"/>
    <property type="match status" value="1"/>
</dbReference>
<dbReference type="PANTHER" id="PTHR30098">
    <property type="entry name" value="LEUCYL/PHENYLALANYL-TRNA--PROTEIN TRANSFERASE"/>
    <property type="match status" value="1"/>
</dbReference>
<dbReference type="PANTHER" id="PTHR30098:SF2">
    <property type="entry name" value="LEUCYL_PHENYLALANYL-TRNA--PROTEIN TRANSFERASE"/>
    <property type="match status" value="1"/>
</dbReference>
<dbReference type="Pfam" id="PF03588">
    <property type="entry name" value="Leu_Phe_trans"/>
    <property type="match status" value="1"/>
</dbReference>
<dbReference type="SUPFAM" id="SSF55729">
    <property type="entry name" value="Acyl-CoA N-acyltransferases (Nat)"/>
    <property type="match status" value="1"/>
</dbReference>